<comment type="function">
    <text evidence="1">Catalyzes the condensation of pantoate with beta-alanine in an ATP-dependent reaction via a pantoyl-adenylate intermediate.</text>
</comment>
<comment type="catalytic activity">
    <reaction evidence="1">
        <text>(R)-pantoate + beta-alanine + ATP = (R)-pantothenate + AMP + diphosphate + H(+)</text>
        <dbReference type="Rhea" id="RHEA:10912"/>
        <dbReference type="ChEBI" id="CHEBI:15378"/>
        <dbReference type="ChEBI" id="CHEBI:15980"/>
        <dbReference type="ChEBI" id="CHEBI:29032"/>
        <dbReference type="ChEBI" id="CHEBI:30616"/>
        <dbReference type="ChEBI" id="CHEBI:33019"/>
        <dbReference type="ChEBI" id="CHEBI:57966"/>
        <dbReference type="ChEBI" id="CHEBI:456215"/>
        <dbReference type="EC" id="6.3.2.1"/>
    </reaction>
</comment>
<comment type="pathway">
    <text evidence="1">Cofactor biosynthesis; (R)-pantothenate biosynthesis; (R)-pantothenate from (R)-pantoate and beta-alanine: step 1/1.</text>
</comment>
<comment type="subunit">
    <text evidence="1">Homodimer.</text>
</comment>
<comment type="subcellular location">
    <subcellularLocation>
        <location evidence="1">Cytoplasm</location>
    </subcellularLocation>
</comment>
<comment type="miscellaneous">
    <text evidence="1">The reaction proceeds by a bi uni uni bi ping pong mechanism.</text>
</comment>
<comment type="similarity">
    <text evidence="1">Belongs to the pantothenate synthetase family.</text>
</comment>
<protein>
    <recommendedName>
        <fullName evidence="1">Pantothenate synthetase</fullName>
        <shortName evidence="1">PS</shortName>
        <ecNumber evidence="1">6.3.2.1</ecNumber>
    </recommendedName>
    <alternativeName>
        <fullName evidence="1">Pantoate--beta-alanine ligase</fullName>
    </alternativeName>
    <alternativeName>
        <fullName evidence="1">Pantoate-activating enzyme</fullName>
    </alternativeName>
</protein>
<feature type="chain" id="PRO_1000123423" description="Pantothenate synthetase">
    <location>
        <begin position="1"/>
        <end position="286"/>
    </location>
</feature>
<feature type="active site" description="Proton donor" evidence="1">
    <location>
        <position position="38"/>
    </location>
</feature>
<feature type="binding site" evidence="1">
    <location>
        <begin position="31"/>
        <end position="38"/>
    </location>
    <ligand>
        <name>ATP</name>
        <dbReference type="ChEBI" id="CHEBI:30616"/>
    </ligand>
</feature>
<feature type="binding site" evidence="1">
    <location>
        <position position="62"/>
    </location>
    <ligand>
        <name>(R)-pantoate</name>
        <dbReference type="ChEBI" id="CHEBI:15980"/>
    </ligand>
</feature>
<feature type="binding site" evidence="1">
    <location>
        <position position="62"/>
    </location>
    <ligand>
        <name>beta-alanine</name>
        <dbReference type="ChEBI" id="CHEBI:57966"/>
    </ligand>
</feature>
<feature type="binding site" evidence="1">
    <location>
        <begin position="148"/>
        <end position="151"/>
    </location>
    <ligand>
        <name>ATP</name>
        <dbReference type="ChEBI" id="CHEBI:30616"/>
    </ligand>
</feature>
<feature type="binding site" evidence="1">
    <location>
        <position position="154"/>
    </location>
    <ligand>
        <name>(R)-pantoate</name>
        <dbReference type="ChEBI" id="CHEBI:15980"/>
    </ligand>
</feature>
<feature type="binding site" evidence="1">
    <location>
        <position position="177"/>
    </location>
    <ligand>
        <name>ATP</name>
        <dbReference type="ChEBI" id="CHEBI:30616"/>
    </ligand>
</feature>
<feature type="binding site" evidence="1">
    <location>
        <begin position="185"/>
        <end position="188"/>
    </location>
    <ligand>
        <name>ATP</name>
        <dbReference type="ChEBI" id="CHEBI:30616"/>
    </ligand>
</feature>
<sequence length="286" mass="32076">MTEVITSIQDMQRLAHDFKHDGKSIGFVPTMGALHDGHLTMMRRSVKENDVSVASVFVNPLQFAPGEDYDAYPRDIEKDTKAAESAGIDYVFHPSVEAMYPDEIGVALKVGKLAEVLEGAQRPIHFNGVVTVVNKLFNIVQPDRAYFGKKDAQQLAIVEKMVQDFNHPIEIVGQDIVREDDGLAKSSRNVYLTEQERQEAPALQKSLQLAEKLYREGERESKIIVEAVTAYLESHTSGHVDEVAVYSYPELVEQHHIEGRIFISLAVKFSKARLIDNLIIGDEEID</sequence>
<proteinExistence type="inferred from homology"/>
<accession>B9DKF5</accession>
<keyword id="KW-0067">ATP-binding</keyword>
<keyword id="KW-0963">Cytoplasm</keyword>
<keyword id="KW-0436">Ligase</keyword>
<keyword id="KW-0547">Nucleotide-binding</keyword>
<keyword id="KW-0566">Pantothenate biosynthesis</keyword>
<keyword id="KW-1185">Reference proteome</keyword>
<gene>
    <name evidence="1" type="primary">panC</name>
    <name type="ordered locus">Sca_2073</name>
</gene>
<dbReference type="EC" id="6.3.2.1" evidence="1"/>
<dbReference type="EMBL" id="AM295250">
    <property type="protein sequence ID" value="CAL28978.1"/>
    <property type="molecule type" value="Genomic_DNA"/>
</dbReference>
<dbReference type="RefSeq" id="WP_015901314.1">
    <property type="nucleotide sequence ID" value="NC_012121.1"/>
</dbReference>
<dbReference type="SMR" id="B9DKF5"/>
<dbReference type="GeneID" id="93794522"/>
<dbReference type="KEGG" id="sca:SCA_2073"/>
<dbReference type="eggNOG" id="COG0414">
    <property type="taxonomic scope" value="Bacteria"/>
</dbReference>
<dbReference type="HOGENOM" id="CLU_047148_0_0_9"/>
<dbReference type="OrthoDB" id="9773087at2"/>
<dbReference type="BioCyc" id="SCAR396513:SCA_RS10465-MONOMER"/>
<dbReference type="UniPathway" id="UPA00028">
    <property type="reaction ID" value="UER00005"/>
</dbReference>
<dbReference type="Proteomes" id="UP000000444">
    <property type="component" value="Chromosome"/>
</dbReference>
<dbReference type="GO" id="GO:0005829">
    <property type="term" value="C:cytosol"/>
    <property type="evidence" value="ECO:0007669"/>
    <property type="project" value="TreeGrafter"/>
</dbReference>
<dbReference type="GO" id="GO:0005524">
    <property type="term" value="F:ATP binding"/>
    <property type="evidence" value="ECO:0007669"/>
    <property type="project" value="UniProtKB-KW"/>
</dbReference>
<dbReference type="GO" id="GO:0004592">
    <property type="term" value="F:pantoate-beta-alanine ligase activity"/>
    <property type="evidence" value="ECO:0007669"/>
    <property type="project" value="UniProtKB-UniRule"/>
</dbReference>
<dbReference type="GO" id="GO:0015940">
    <property type="term" value="P:pantothenate biosynthetic process"/>
    <property type="evidence" value="ECO:0007669"/>
    <property type="project" value="UniProtKB-UniRule"/>
</dbReference>
<dbReference type="CDD" id="cd00560">
    <property type="entry name" value="PanC"/>
    <property type="match status" value="1"/>
</dbReference>
<dbReference type="FunFam" id="3.30.1300.10:FF:000001">
    <property type="entry name" value="Pantothenate synthetase"/>
    <property type="match status" value="1"/>
</dbReference>
<dbReference type="FunFam" id="3.40.50.620:FF:000013">
    <property type="entry name" value="Pantothenate synthetase"/>
    <property type="match status" value="1"/>
</dbReference>
<dbReference type="Gene3D" id="3.40.50.620">
    <property type="entry name" value="HUPs"/>
    <property type="match status" value="1"/>
</dbReference>
<dbReference type="Gene3D" id="3.30.1300.10">
    <property type="entry name" value="Pantoate-beta-alanine ligase, C-terminal domain"/>
    <property type="match status" value="1"/>
</dbReference>
<dbReference type="HAMAP" id="MF_00158">
    <property type="entry name" value="PanC"/>
    <property type="match status" value="1"/>
</dbReference>
<dbReference type="InterPro" id="IPR003721">
    <property type="entry name" value="Pantoate_ligase"/>
</dbReference>
<dbReference type="InterPro" id="IPR042176">
    <property type="entry name" value="Pantoate_ligase_C"/>
</dbReference>
<dbReference type="InterPro" id="IPR014729">
    <property type="entry name" value="Rossmann-like_a/b/a_fold"/>
</dbReference>
<dbReference type="NCBIfam" id="TIGR00018">
    <property type="entry name" value="panC"/>
    <property type="match status" value="1"/>
</dbReference>
<dbReference type="PANTHER" id="PTHR21299">
    <property type="entry name" value="CYTIDYLATE KINASE/PANTOATE-BETA-ALANINE LIGASE"/>
    <property type="match status" value="1"/>
</dbReference>
<dbReference type="PANTHER" id="PTHR21299:SF1">
    <property type="entry name" value="PANTOATE--BETA-ALANINE LIGASE"/>
    <property type="match status" value="1"/>
</dbReference>
<dbReference type="Pfam" id="PF02569">
    <property type="entry name" value="Pantoate_ligase"/>
    <property type="match status" value="1"/>
</dbReference>
<dbReference type="SUPFAM" id="SSF52374">
    <property type="entry name" value="Nucleotidylyl transferase"/>
    <property type="match status" value="1"/>
</dbReference>
<evidence type="ECO:0000255" key="1">
    <source>
        <dbReference type="HAMAP-Rule" id="MF_00158"/>
    </source>
</evidence>
<reference key="1">
    <citation type="journal article" date="2009" name="Appl. Environ. Microbiol.">
        <title>Genome analysis of the meat starter culture bacterium Staphylococcus carnosus TM300.</title>
        <authorList>
            <person name="Rosenstein R."/>
            <person name="Nerz C."/>
            <person name="Biswas L."/>
            <person name="Resch A."/>
            <person name="Raddatz G."/>
            <person name="Schuster S.C."/>
            <person name="Goetz F."/>
        </authorList>
    </citation>
    <scope>NUCLEOTIDE SEQUENCE [LARGE SCALE GENOMIC DNA]</scope>
    <source>
        <strain>TM300</strain>
    </source>
</reference>
<name>PANC_STACT</name>
<organism>
    <name type="scientific">Staphylococcus carnosus (strain TM300)</name>
    <dbReference type="NCBI Taxonomy" id="396513"/>
    <lineage>
        <taxon>Bacteria</taxon>
        <taxon>Bacillati</taxon>
        <taxon>Bacillota</taxon>
        <taxon>Bacilli</taxon>
        <taxon>Bacillales</taxon>
        <taxon>Staphylococcaceae</taxon>
        <taxon>Staphylococcus</taxon>
    </lineage>
</organism>